<sequence length="83" mass="8863">MAGPWTIEPGKNHGGIPTWAWPRSTTVHVQVVGGGRGRVRMQAGASPDEDNDVNGETSFSRSFGGSRLNVTNIGSRTLKVWTA</sequence>
<keyword id="KW-1185">Reference proteome</keyword>
<gene>
    <name type="ORF">DDB_G0274299</name>
</gene>
<organism>
    <name type="scientific">Dictyostelium discoideum</name>
    <name type="common">Social amoeba</name>
    <dbReference type="NCBI Taxonomy" id="44689"/>
    <lineage>
        <taxon>Eukaryota</taxon>
        <taxon>Amoebozoa</taxon>
        <taxon>Evosea</taxon>
        <taxon>Eumycetozoa</taxon>
        <taxon>Dictyostelia</taxon>
        <taxon>Dictyosteliales</taxon>
        <taxon>Dictyosteliaceae</taxon>
        <taxon>Dictyostelium</taxon>
    </lineage>
</organism>
<reference key="1">
    <citation type="journal article" date="2002" name="Nature">
        <title>Sequence and analysis of chromosome 2 of Dictyostelium discoideum.</title>
        <authorList>
            <person name="Gloeckner G."/>
            <person name="Eichinger L."/>
            <person name="Szafranski K."/>
            <person name="Pachebat J.A."/>
            <person name="Bankier A.T."/>
            <person name="Dear P.H."/>
            <person name="Lehmann R."/>
            <person name="Baumgart C."/>
            <person name="Parra G."/>
            <person name="Abril J.F."/>
            <person name="Guigo R."/>
            <person name="Kumpf K."/>
            <person name="Tunggal B."/>
            <person name="Cox E.C."/>
            <person name="Quail M.A."/>
            <person name="Platzer M."/>
            <person name="Rosenthal A."/>
            <person name="Noegel A.A."/>
        </authorList>
    </citation>
    <scope>NUCLEOTIDE SEQUENCE [LARGE SCALE GENOMIC DNA]</scope>
    <source>
        <strain>AX4</strain>
    </source>
</reference>
<reference key="2">
    <citation type="journal article" date="2005" name="Nature">
        <title>The genome of the social amoeba Dictyostelium discoideum.</title>
        <authorList>
            <person name="Eichinger L."/>
            <person name="Pachebat J.A."/>
            <person name="Gloeckner G."/>
            <person name="Rajandream M.A."/>
            <person name="Sucgang R."/>
            <person name="Berriman M."/>
            <person name="Song J."/>
            <person name="Olsen R."/>
            <person name="Szafranski K."/>
            <person name="Xu Q."/>
            <person name="Tunggal B."/>
            <person name="Kummerfeld S."/>
            <person name="Madera M."/>
            <person name="Konfortov B.A."/>
            <person name="Rivero F."/>
            <person name="Bankier A.T."/>
            <person name="Lehmann R."/>
            <person name="Hamlin N."/>
            <person name="Davies R."/>
            <person name="Gaudet P."/>
            <person name="Fey P."/>
            <person name="Pilcher K."/>
            <person name="Chen G."/>
            <person name="Saunders D."/>
            <person name="Sodergren E.J."/>
            <person name="Davis P."/>
            <person name="Kerhornou A."/>
            <person name="Nie X."/>
            <person name="Hall N."/>
            <person name="Anjard C."/>
            <person name="Hemphill L."/>
            <person name="Bason N."/>
            <person name="Farbrother P."/>
            <person name="Desany B."/>
            <person name="Just E."/>
            <person name="Morio T."/>
            <person name="Rost R."/>
            <person name="Churcher C.M."/>
            <person name="Cooper J."/>
            <person name="Haydock S."/>
            <person name="van Driessche N."/>
            <person name="Cronin A."/>
            <person name="Goodhead I."/>
            <person name="Muzny D.M."/>
            <person name="Mourier T."/>
            <person name="Pain A."/>
            <person name="Lu M."/>
            <person name="Harper D."/>
            <person name="Lindsay R."/>
            <person name="Hauser H."/>
            <person name="James K.D."/>
            <person name="Quiles M."/>
            <person name="Madan Babu M."/>
            <person name="Saito T."/>
            <person name="Buchrieser C."/>
            <person name="Wardroper A."/>
            <person name="Felder M."/>
            <person name="Thangavelu M."/>
            <person name="Johnson D."/>
            <person name="Knights A."/>
            <person name="Loulseged H."/>
            <person name="Mungall K.L."/>
            <person name="Oliver K."/>
            <person name="Price C."/>
            <person name="Quail M.A."/>
            <person name="Urushihara H."/>
            <person name="Hernandez J."/>
            <person name="Rabbinowitsch E."/>
            <person name="Steffen D."/>
            <person name="Sanders M."/>
            <person name="Ma J."/>
            <person name="Kohara Y."/>
            <person name="Sharp S."/>
            <person name="Simmonds M.N."/>
            <person name="Spiegler S."/>
            <person name="Tivey A."/>
            <person name="Sugano S."/>
            <person name="White B."/>
            <person name="Walker D."/>
            <person name="Woodward J.R."/>
            <person name="Winckler T."/>
            <person name="Tanaka Y."/>
            <person name="Shaulsky G."/>
            <person name="Schleicher M."/>
            <person name="Weinstock G.M."/>
            <person name="Rosenthal A."/>
            <person name="Cox E.C."/>
            <person name="Chisholm R.L."/>
            <person name="Gibbs R.A."/>
            <person name="Loomis W.F."/>
            <person name="Platzer M."/>
            <person name="Kay R.R."/>
            <person name="Williams J.G."/>
            <person name="Dear P.H."/>
            <person name="Noegel A.A."/>
            <person name="Barrell B.G."/>
            <person name="Kuspa A."/>
        </authorList>
    </citation>
    <scope>NUCLEOTIDE SEQUENCE [LARGE SCALE GENOMIC DNA]</scope>
    <source>
        <strain>AX4</strain>
    </source>
</reference>
<reference key="3">
    <citation type="journal article" date="2003" name="Eukaryot. Cell">
        <title>Changing patterns of gene expression in Dictyostelium prestalk cell subtypes recognized by in situ hybridization with genes from microarray analyses.</title>
        <authorList>
            <person name="Maeda M."/>
            <person name="Sakamoto H."/>
            <person name="Iranfar N."/>
            <person name="Fuller D."/>
            <person name="Maruo T."/>
            <person name="Ogihara S."/>
            <person name="Morio T."/>
            <person name="Urushihara H."/>
            <person name="Tanaka Y."/>
            <person name="Loomis W.F."/>
        </authorList>
    </citation>
    <scope>DEVELOPMENTAL STAGE [LARGE SCALE ANALYSIS]</scope>
</reference>
<proteinExistence type="evidence at transcript level"/>
<protein>
    <recommendedName>
        <fullName>Uncharacterized protein DDB_G0274299</fullName>
    </recommendedName>
</protein>
<name>Y4299_DICDI</name>
<feature type="chain" id="PRO_0000392621" description="Uncharacterized protein DDB_G0274299">
    <location>
        <begin position="1"/>
        <end position="83"/>
    </location>
</feature>
<feature type="region of interest" description="Disordered" evidence="1">
    <location>
        <begin position="40"/>
        <end position="65"/>
    </location>
</feature>
<feature type="compositionally biased region" description="Polar residues" evidence="1">
    <location>
        <begin position="54"/>
        <end position="65"/>
    </location>
</feature>
<dbReference type="EMBL" id="AAFI02000012">
    <property type="protein sequence ID" value="EAL70042.1"/>
    <property type="molecule type" value="Genomic_DNA"/>
</dbReference>
<dbReference type="RefSeq" id="XP_644001.1">
    <property type="nucleotide sequence ID" value="XM_638909.1"/>
</dbReference>
<dbReference type="FunCoup" id="Q86J25">
    <property type="interactions" value="131"/>
</dbReference>
<dbReference type="PaxDb" id="44689-DDB0229925"/>
<dbReference type="EnsemblProtists" id="EAL70042">
    <property type="protein sequence ID" value="EAL70042"/>
    <property type="gene ID" value="DDB_G0274299"/>
</dbReference>
<dbReference type="GeneID" id="8619429"/>
<dbReference type="KEGG" id="ddi:DDB_G0274299"/>
<dbReference type="dictyBase" id="DDB_G0274299"/>
<dbReference type="VEuPathDB" id="AmoebaDB:DDB_G0274299"/>
<dbReference type="eggNOG" id="ENOG502RI4G">
    <property type="taxonomic scope" value="Eukaryota"/>
</dbReference>
<dbReference type="HOGENOM" id="CLU_2547329_0_0_1"/>
<dbReference type="InParanoid" id="Q86J25"/>
<dbReference type="OMA" id="QSGINTW"/>
<dbReference type="PhylomeDB" id="Q86J25"/>
<dbReference type="PRO" id="PR:Q86J25"/>
<dbReference type="Proteomes" id="UP000002195">
    <property type="component" value="Chromosome 2"/>
</dbReference>
<accession>Q86J25</accession>
<accession>Q555R2</accession>
<evidence type="ECO:0000256" key="1">
    <source>
        <dbReference type="SAM" id="MobiDB-lite"/>
    </source>
</evidence>
<evidence type="ECO:0000269" key="2">
    <source>
    </source>
</evidence>
<comment type="developmental stage">
    <text evidence="2">Expressed in pstAB cells in slug stage, spreading to all prestalk cells in culmination.</text>
</comment>